<accession>Q8PXE6</accession>
<reference key="1">
    <citation type="journal article" date="2002" name="J. Mol. Microbiol. Biotechnol.">
        <title>The genome of Methanosarcina mazei: evidence for lateral gene transfer between Bacteria and Archaea.</title>
        <authorList>
            <person name="Deppenmeier U."/>
            <person name="Johann A."/>
            <person name="Hartsch T."/>
            <person name="Merkl R."/>
            <person name="Schmitz R.A."/>
            <person name="Martinez-Arias R."/>
            <person name="Henne A."/>
            <person name="Wiezer A."/>
            <person name="Baeumer S."/>
            <person name="Jacobi C."/>
            <person name="Brueggemann H."/>
            <person name="Lienard T."/>
            <person name="Christmann A."/>
            <person name="Boemecke M."/>
            <person name="Steckel S."/>
            <person name="Bhattacharyya A."/>
            <person name="Lykidis A."/>
            <person name="Overbeek R."/>
            <person name="Klenk H.-P."/>
            <person name="Gunsalus R.P."/>
            <person name="Fritz H.-J."/>
            <person name="Gottschalk G."/>
        </authorList>
    </citation>
    <scope>NUCLEOTIDE SEQUENCE [LARGE SCALE GENOMIC DNA]</scope>
    <source>
        <strain>ATCC BAA-159 / DSM 3647 / Goe1 / Go1 / JCM 11833 / OCM 88</strain>
    </source>
</reference>
<name>AROE_METMA</name>
<protein>
    <recommendedName>
        <fullName evidence="1">Shikimate dehydrogenase (NADP(+))</fullName>
        <shortName evidence="1">SDH</shortName>
        <ecNumber evidence="1">1.1.1.25</ecNumber>
    </recommendedName>
</protein>
<evidence type="ECO:0000255" key="1">
    <source>
        <dbReference type="HAMAP-Rule" id="MF_00222"/>
    </source>
</evidence>
<dbReference type="EC" id="1.1.1.25" evidence="1"/>
<dbReference type="EMBL" id="AE008384">
    <property type="protein sequence ID" value="AAM30970.1"/>
    <property type="molecule type" value="Genomic_DNA"/>
</dbReference>
<dbReference type="RefSeq" id="WP_011033221.1">
    <property type="nucleotide sequence ID" value="NC_003901.1"/>
</dbReference>
<dbReference type="SMR" id="Q8PXE6"/>
<dbReference type="KEGG" id="mma:MM_1274"/>
<dbReference type="PATRIC" id="fig|192952.21.peg.1481"/>
<dbReference type="eggNOG" id="arCOG01033">
    <property type="taxonomic scope" value="Archaea"/>
</dbReference>
<dbReference type="HOGENOM" id="CLU_044063_0_1_2"/>
<dbReference type="UniPathway" id="UPA00053">
    <property type="reaction ID" value="UER00087"/>
</dbReference>
<dbReference type="Proteomes" id="UP000000595">
    <property type="component" value="Chromosome"/>
</dbReference>
<dbReference type="GO" id="GO:0050661">
    <property type="term" value="F:NADP binding"/>
    <property type="evidence" value="ECO:0007669"/>
    <property type="project" value="InterPro"/>
</dbReference>
<dbReference type="GO" id="GO:0004764">
    <property type="term" value="F:shikimate 3-dehydrogenase (NADP+) activity"/>
    <property type="evidence" value="ECO:0007669"/>
    <property type="project" value="UniProtKB-UniRule"/>
</dbReference>
<dbReference type="GO" id="GO:0008652">
    <property type="term" value="P:amino acid biosynthetic process"/>
    <property type="evidence" value="ECO:0007669"/>
    <property type="project" value="UniProtKB-KW"/>
</dbReference>
<dbReference type="GO" id="GO:0009073">
    <property type="term" value="P:aromatic amino acid family biosynthetic process"/>
    <property type="evidence" value="ECO:0007669"/>
    <property type="project" value="UniProtKB-KW"/>
</dbReference>
<dbReference type="GO" id="GO:0009423">
    <property type="term" value="P:chorismate biosynthetic process"/>
    <property type="evidence" value="ECO:0007669"/>
    <property type="project" value="UniProtKB-UniRule"/>
</dbReference>
<dbReference type="GO" id="GO:0019632">
    <property type="term" value="P:shikimate metabolic process"/>
    <property type="evidence" value="ECO:0007669"/>
    <property type="project" value="InterPro"/>
</dbReference>
<dbReference type="CDD" id="cd01065">
    <property type="entry name" value="NAD_bind_Shikimate_DH"/>
    <property type="match status" value="1"/>
</dbReference>
<dbReference type="FunFam" id="3.40.50.720:FF:000086">
    <property type="entry name" value="Quinate/shikimate dehydrogenase"/>
    <property type="match status" value="1"/>
</dbReference>
<dbReference type="Gene3D" id="3.40.50.10860">
    <property type="entry name" value="Leucine Dehydrogenase, chain A, domain 1"/>
    <property type="match status" value="1"/>
</dbReference>
<dbReference type="Gene3D" id="3.40.50.720">
    <property type="entry name" value="NAD(P)-binding Rossmann-like Domain"/>
    <property type="match status" value="1"/>
</dbReference>
<dbReference type="HAMAP" id="MF_00222">
    <property type="entry name" value="Shikimate_DH_AroE"/>
    <property type="match status" value="1"/>
</dbReference>
<dbReference type="InterPro" id="IPR046346">
    <property type="entry name" value="Aminoacid_DH-like_N_sf"/>
</dbReference>
<dbReference type="InterPro" id="IPR036291">
    <property type="entry name" value="NAD(P)-bd_dom_sf"/>
</dbReference>
<dbReference type="InterPro" id="IPR041121">
    <property type="entry name" value="SDH_C"/>
</dbReference>
<dbReference type="InterPro" id="IPR011342">
    <property type="entry name" value="Shikimate_DH"/>
</dbReference>
<dbReference type="InterPro" id="IPR013708">
    <property type="entry name" value="Shikimate_DH-bd_N"/>
</dbReference>
<dbReference type="InterPro" id="IPR022893">
    <property type="entry name" value="Shikimate_DH_fam"/>
</dbReference>
<dbReference type="InterPro" id="IPR006151">
    <property type="entry name" value="Shikm_DH/Glu-tRNA_Rdtase"/>
</dbReference>
<dbReference type="NCBIfam" id="TIGR00507">
    <property type="entry name" value="aroE"/>
    <property type="match status" value="1"/>
</dbReference>
<dbReference type="NCBIfam" id="NF001319">
    <property type="entry name" value="PRK00258.3-3"/>
    <property type="match status" value="1"/>
</dbReference>
<dbReference type="PANTHER" id="PTHR21089:SF1">
    <property type="entry name" value="BIFUNCTIONAL 3-DEHYDROQUINATE DEHYDRATASE_SHIKIMATE DEHYDROGENASE, CHLOROPLASTIC"/>
    <property type="match status" value="1"/>
</dbReference>
<dbReference type="PANTHER" id="PTHR21089">
    <property type="entry name" value="SHIKIMATE DEHYDROGENASE"/>
    <property type="match status" value="1"/>
</dbReference>
<dbReference type="Pfam" id="PF18317">
    <property type="entry name" value="SDH_C"/>
    <property type="match status" value="1"/>
</dbReference>
<dbReference type="Pfam" id="PF01488">
    <property type="entry name" value="Shikimate_DH"/>
    <property type="match status" value="1"/>
</dbReference>
<dbReference type="Pfam" id="PF08501">
    <property type="entry name" value="Shikimate_dh_N"/>
    <property type="match status" value="1"/>
</dbReference>
<dbReference type="SUPFAM" id="SSF53223">
    <property type="entry name" value="Aminoacid dehydrogenase-like, N-terminal domain"/>
    <property type="match status" value="1"/>
</dbReference>
<dbReference type="SUPFAM" id="SSF51735">
    <property type="entry name" value="NAD(P)-binding Rossmann-fold domains"/>
    <property type="match status" value="1"/>
</dbReference>
<sequence>MKQVFGVFGDPVGHSLSPAMHNAAFSALGMDCIYHAFRVTPEKLEKAILGAEAMGFGGINLTVPLKEKALKLDFVKPDPLAKRIGAVNTLVFGKKGDIQGYNTDGPGAKQALLDTGVEIRGSRMVVAGAGGAARAVAFQLAADGADITVINRTEERAVGLAREISAADLPGKIRGTGLSGLKELLRDADVLINTTTLGMHPNTDATIVTAEELHSGLTVFDIVYNPLETRLLREARTSGAKTISGVLMLVYQGAEAFRLWTGVEPPLELMKKTVLEALQA</sequence>
<proteinExistence type="inferred from homology"/>
<keyword id="KW-0028">Amino-acid biosynthesis</keyword>
<keyword id="KW-0057">Aromatic amino acid biosynthesis</keyword>
<keyword id="KW-0521">NADP</keyword>
<keyword id="KW-0560">Oxidoreductase</keyword>
<organism>
    <name type="scientific">Methanosarcina mazei (strain ATCC BAA-159 / DSM 3647 / Goe1 / Go1 / JCM 11833 / OCM 88)</name>
    <name type="common">Methanosarcina frisia</name>
    <dbReference type="NCBI Taxonomy" id="192952"/>
    <lineage>
        <taxon>Archaea</taxon>
        <taxon>Methanobacteriati</taxon>
        <taxon>Methanobacteriota</taxon>
        <taxon>Stenosarchaea group</taxon>
        <taxon>Methanomicrobia</taxon>
        <taxon>Methanosarcinales</taxon>
        <taxon>Methanosarcinaceae</taxon>
        <taxon>Methanosarcina</taxon>
    </lineage>
</organism>
<feature type="chain" id="PRO_0000136062" description="Shikimate dehydrogenase (NADP(+))">
    <location>
        <begin position="1"/>
        <end position="280"/>
    </location>
</feature>
<feature type="active site" description="Proton acceptor" evidence="1">
    <location>
        <position position="66"/>
    </location>
</feature>
<feature type="binding site" evidence="1">
    <location>
        <begin position="15"/>
        <end position="17"/>
    </location>
    <ligand>
        <name>shikimate</name>
        <dbReference type="ChEBI" id="CHEBI:36208"/>
    </ligand>
</feature>
<feature type="binding site" evidence="1">
    <location>
        <position position="62"/>
    </location>
    <ligand>
        <name>shikimate</name>
        <dbReference type="ChEBI" id="CHEBI:36208"/>
    </ligand>
</feature>
<feature type="binding site" evidence="1">
    <location>
        <position position="88"/>
    </location>
    <ligand>
        <name>shikimate</name>
        <dbReference type="ChEBI" id="CHEBI:36208"/>
    </ligand>
</feature>
<feature type="binding site" evidence="1">
    <location>
        <position position="104"/>
    </location>
    <ligand>
        <name>shikimate</name>
        <dbReference type="ChEBI" id="CHEBI:36208"/>
    </ligand>
</feature>
<feature type="binding site" evidence="1">
    <location>
        <begin position="128"/>
        <end position="132"/>
    </location>
    <ligand>
        <name>NADP(+)</name>
        <dbReference type="ChEBI" id="CHEBI:58349"/>
    </ligand>
</feature>
<feature type="binding site" evidence="1">
    <location>
        <begin position="151"/>
        <end position="156"/>
    </location>
    <ligand>
        <name>NADP(+)</name>
        <dbReference type="ChEBI" id="CHEBI:58349"/>
    </ligand>
</feature>
<feature type="binding site" evidence="1">
    <location>
        <position position="222"/>
    </location>
    <ligand>
        <name>NADP(+)</name>
        <dbReference type="ChEBI" id="CHEBI:58349"/>
    </ligand>
</feature>
<feature type="binding site" evidence="1">
    <location>
        <position position="224"/>
    </location>
    <ligand>
        <name>shikimate</name>
        <dbReference type="ChEBI" id="CHEBI:36208"/>
    </ligand>
</feature>
<feature type="binding site" evidence="1">
    <location>
        <position position="245"/>
    </location>
    <ligand>
        <name>NADP(+)</name>
        <dbReference type="ChEBI" id="CHEBI:58349"/>
    </ligand>
</feature>
<gene>
    <name evidence="1" type="primary">aroE</name>
    <name type="ordered locus">MM_1274</name>
</gene>
<comment type="function">
    <text evidence="1">Involved in the biosynthesis of the chorismate, which leads to the biosynthesis of aromatic amino acids. Catalyzes the reversible NADPH linked reduction of 3-dehydroshikimate (DHSA) to yield shikimate (SA).</text>
</comment>
<comment type="catalytic activity">
    <reaction evidence="1">
        <text>shikimate + NADP(+) = 3-dehydroshikimate + NADPH + H(+)</text>
        <dbReference type="Rhea" id="RHEA:17737"/>
        <dbReference type="ChEBI" id="CHEBI:15378"/>
        <dbReference type="ChEBI" id="CHEBI:16630"/>
        <dbReference type="ChEBI" id="CHEBI:36208"/>
        <dbReference type="ChEBI" id="CHEBI:57783"/>
        <dbReference type="ChEBI" id="CHEBI:58349"/>
        <dbReference type="EC" id="1.1.1.25"/>
    </reaction>
</comment>
<comment type="pathway">
    <text evidence="1">Metabolic intermediate biosynthesis; chorismate biosynthesis; chorismate from D-erythrose 4-phosphate and phosphoenolpyruvate: step 4/7.</text>
</comment>
<comment type="subunit">
    <text evidence="1">Homodimer.</text>
</comment>
<comment type="similarity">
    <text evidence="1">Belongs to the shikimate dehydrogenase family.</text>
</comment>